<reference key="1">
    <citation type="journal article" date="2005" name="Science">
        <title>The transcriptional landscape of the mammalian genome.</title>
        <authorList>
            <person name="Carninci P."/>
            <person name="Kasukawa T."/>
            <person name="Katayama S."/>
            <person name="Gough J."/>
            <person name="Frith M.C."/>
            <person name="Maeda N."/>
            <person name="Oyama R."/>
            <person name="Ravasi T."/>
            <person name="Lenhard B."/>
            <person name="Wells C."/>
            <person name="Kodzius R."/>
            <person name="Shimokawa K."/>
            <person name="Bajic V.B."/>
            <person name="Brenner S.E."/>
            <person name="Batalov S."/>
            <person name="Forrest A.R."/>
            <person name="Zavolan M."/>
            <person name="Davis M.J."/>
            <person name="Wilming L.G."/>
            <person name="Aidinis V."/>
            <person name="Allen J.E."/>
            <person name="Ambesi-Impiombato A."/>
            <person name="Apweiler R."/>
            <person name="Aturaliya R.N."/>
            <person name="Bailey T.L."/>
            <person name="Bansal M."/>
            <person name="Baxter L."/>
            <person name="Beisel K.W."/>
            <person name="Bersano T."/>
            <person name="Bono H."/>
            <person name="Chalk A.M."/>
            <person name="Chiu K.P."/>
            <person name="Choudhary V."/>
            <person name="Christoffels A."/>
            <person name="Clutterbuck D.R."/>
            <person name="Crowe M.L."/>
            <person name="Dalla E."/>
            <person name="Dalrymple B.P."/>
            <person name="de Bono B."/>
            <person name="Della Gatta G."/>
            <person name="di Bernardo D."/>
            <person name="Down T."/>
            <person name="Engstrom P."/>
            <person name="Fagiolini M."/>
            <person name="Faulkner G."/>
            <person name="Fletcher C.F."/>
            <person name="Fukushima T."/>
            <person name="Furuno M."/>
            <person name="Futaki S."/>
            <person name="Gariboldi M."/>
            <person name="Georgii-Hemming P."/>
            <person name="Gingeras T.R."/>
            <person name="Gojobori T."/>
            <person name="Green R.E."/>
            <person name="Gustincich S."/>
            <person name="Harbers M."/>
            <person name="Hayashi Y."/>
            <person name="Hensch T.K."/>
            <person name="Hirokawa N."/>
            <person name="Hill D."/>
            <person name="Huminiecki L."/>
            <person name="Iacono M."/>
            <person name="Ikeo K."/>
            <person name="Iwama A."/>
            <person name="Ishikawa T."/>
            <person name="Jakt M."/>
            <person name="Kanapin A."/>
            <person name="Katoh M."/>
            <person name="Kawasawa Y."/>
            <person name="Kelso J."/>
            <person name="Kitamura H."/>
            <person name="Kitano H."/>
            <person name="Kollias G."/>
            <person name="Krishnan S.P."/>
            <person name="Kruger A."/>
            <person name="Kummerfeld S.K."/>
            <person name="Kurochkin I.V."/>
            <person name="Lareau L.F."/>
            <person name="Lazarevic D."/>
            <person name="Lipovich L."/>
            <person name="Liu J."/>
            <person name="Liuni S."/>
            <person name="McWilliam S."/>
            <person name="Madan Babu M."/>
            <person name="Madera M."/>
            <person name="Marchionni L."/>
            <person name="Matsuda H."/>
            <person name="Matsuzawa S."/>
            <person name="Miki H."/>
            <person name="Mignone F."/>
            <person name="Miyake S."/>
            <person name="Morris K."/>
            <person name="Mottagui-Tabar S."/>
            <person name="Mulder N."/>
            <person name="Nakano N."/>
            <person name="Nakauchi H."/>
            <person name="Ng P."/>
            <person name="Nilsson R."/>
            <person name="Nishiguchi S."/>
            <person name="Nishikawa S."/>
            <person name="Nori F."/>
            <person name="Ohara O."/>
            <person name="Okazaki Y."/>
            <person name="Orlando V."/>
            <person name="Pang K.C."/>
            <person name="Pavan W.J."/>
            <person name="Pavesi G."/>
            <person name="Pesole G."/>
            <person name="Petrovsky N."/>
            <person name="Piazza S."/>
            <person name="Reed J."/>
            <person name="Reid J.F."/>
            <person name="Ring B.Z."/>
            <person name="Ringwald M."/>
            <person name="Rost B."/>
            <person name="Ruan Y."/>
            <person name="Salzberg S.L."/>
            <person name="Sandelin A."/>
            <person name="Schneider C."/>
            <person name="Schoenbach C."/>
            <person name="Sekiguchi K."/>
            <person name="Semple C.A."/>
            <person name="Seno S."/>
            <person name="Sessa L."/>
            <person name="Sheng Y."/>
            <person name="Shibata Y."/>
            <person name="Shimada H."/>
            <person name="Shimada K."/>
            <person name="Silva D."/>
            <person name="Sinclair B."/>
            <person name="Sperling S."/>
            <person name="Stupka E."/>
            <person name="Sugiura K."/>
            <person name="Sultana R."/>
            <person name="Takenaka Y."/>
            <person name="Taki K."/>
            <person name="Tammoja K."/>
            <person name="Tan S.L."/>
            <person name="Tang S."/>
            <person name="Taylor M.S."/>
            <person name="Tegner J."/>
            <person name="Teichmann S.A."/>
            <person name="Ueda H.R."/>
            <person name="van Nimwegen E."/>
            <person name="Verardo R."/>
            <person name="Wei C.L."/>
            <person name="Yagi K."/>
            <person name="Yamanishi H."/>
            <person name="Zabarovsky E."/>
            <person name="Zhu S."/>
            <person name="Zimmer A."/>
            <person name="Hide W."/>
            <person name="Bult C."/>
            <person name="Grimmond S.M."/>
            <person name="Teasdale R.D."/>
            <person name="Liu E.T."/>
            <person name="Brusic V."/>
            <person name="Quackenbush J."/>
            <person name="Wahlestedt C."/>
            <person name="Mattick J.S."/>
            <person name="Hume D.A."/>
            <person name="Kai C."/>
            <person name="Sasaki D."/>
            <person name="Tomaru Y."/>
            <person name="Fukuda S."/>
            <person name="Kanamori-Katayama M."/>
            <person name="Suzuki M."/>
            <person name="Aoki J."/>
            <person name="Arakawa T."/>
            <person name="Iida J."/>
            <person name="Imamura K."/>
            <person name="Itoh M."/>
            <person name="Kato T."/>
            <person name="Kawaji H."/>
            <person name="Kawagashira N."/>
            <person name="Kawashima T."/>
            <person name="Kojima M."/>
            <person name="Kondo S."/>
            <person name="Konno H."/>
            <person name="Nakano K."/>
            <person name="Ninomiya N."/>
            <person name="Nishio T."/>
            <person name="Okada M."/>
            <person name="Plessy C."/>
            <person name="Shibata K."/>
            <person name="Shiraki T."/>
            <person name="Suzuki S."/>
            <person name="Tagami M."/>
            <person name="Waki K."/>
            <person name="Watahiki A."/>
            <person name="Okamura-Oho Y."/>
            <person name="Suzuki H."/>
            <person name="Kawai J."/>
            <person name="Hayashizaki Y."/>
        </authorList>
    </citation>
    <scope>NUCLEOTIDE SEQUENCE [LARGE SCALE MRNA] (ISOFORMS 1 AND 2)</scope>
    <source>
        <strain>C57BL/6J</strain>
        <tissue>Liver</tissue>
        <tissue>Medulla oblongata</tissue>
        <tissue>Retina</tissue>
    </source>
</reference>
<reference key="2">
    <citation type="journal article" date="2016" name="Genome Res.">
        <title>Exome sequencing and CRISPR/Cas genome editing identify mutations of ZAK as a cause of limb defects in humans and mice.</title>
        <authorList>
            <person name="Spielmann M."/>
            <person name="Kakar N."/>
            <person name="Tayebi N."/>
            <person name="Leettola C."/>
            <person name="Nuernberg G."/>
            <person name="Sowada N."/>
            <person name="Lupianez D.G."/>
            <person name="Harabula I."/>
            <person name="Floettmann R."/>
            <person name="Horn D."/>
            <person name="Chan W.L."/>
            <person name="Wittler L."/>
            <person name="Yilmaz R."/>
            <person name="Altmueller J."/>
            <person name="Thiele H."/>
            <person name="van Bokhoven H."/>
            <person name="Schwartz C.E."/>
            <person name="Nuernberg P."/>
            <person name="Bowie J.U."/>
            <person name="Ahmad J."/>
            <person name="Kubisch C."/>
            <person name="Mundlos S."/>
            <person name="Borck G."/>
        </authorList>
    </citation>
    <scope>DEVELOPMENTAL STAGE</scope>
</reference>
<name>Z385B_MOUSE</name>
<organism>
    <name type="scientific">Mus musculus</name>
    <name type="common">Mouse</name>
    <dbReference type="NCBI Taxonomy" id="10090"/>
    <lineage>
        <taxon>Eukaryota</taxon>
        <taxon>Metazoa</taxon>
        <taxon>Chordata</taxon>
        <taxon>Craniata</taxon>
        <taxon>Vertebrata</taxon>
        <taxon>Euteleostomi</taxon>
        <taxon>Mammalia</taxon>
        <taxon>Eutheria</taxon>
        <taxon>Euarchontoglires</taxon>
        <taxon>Glires</taxon>
        <taxon>Rodentia</taxon>
        <taxon>Myomorpha</taxon>
        <taxon>Muroidea</taxon>
        <taxon>Muridae</taxon>
        <taxon>Murinae</taxon>
        <taxon>Mus</taxon>
        <taxon>Mus</taxon>
    </lineage>
</organism>
<sequence>MNMATFLRGFEEKGLKNDRPGDQFSKEKKKILFSFCEVCNIQLNSAAQAQVHYDGKSHRKRVKQLSDGQPPPPVQGSVPLLAGPCPCPGPGPNTSTGSACHTTTLPALVRTPTLMMQPSLDIKPFMSFPVDSSSAVGLFPNFNTMDPVQKAVINHTFGVSIPPKKKQVISCNVCQLRFNSDSQAEAHYKGSKHAKKVKALEATKNKPKMVPSKDSAKANPSCSIRPGTGDSSDKSEDKGKIKATSSSQPSGSEGGSFLLKSGTTPLPLGAIASPSKSTNGAPGSVAESEEEKAKKLLYCSLCKVAVNSLSQLEAHNTGSKHKTMVEARNGAGPIKSYPRPGSRLKVQNGSKGSGLQNKMFHCEICDVHVNSEIQLKQHISSRRHKDRVAGKPLKPKYSPYNKLQRSPSILAAKLAFQKDLMKPLAPTFLSSPLAAAAVSSALSLPPRPSASLFQAAAIPPALLRPGHGPIRATPASILFAPY</sequence>
<dbReference type="EMBL" id="AK046798">
    <property type="protein sequence ID" value="BAC32874.1"/>
    <property type="molecule type" value="mRNA"/>
</dbReference>
<dbReference type="EMBL" id="AK050293">
    <property type="protein sequence ID" value="BAC34170.1"/>
    <property type="molecule type" value="mRNA"/>
</dbReference>
<dbReference type="EMBL" id="AK149352">
    <property type="protein sequence ID" value="BAE28828.1"/>
    <property type="molecule type" value="mRNA"/>
</dbReference>
<dbReference type="CCDS" id="CCDS16164.1">
    <molecule id="Q8BXJ8-1"/>
</dbReference>
<dbReference type="CCDS" id="CCDS50611.1">
    <molecule id="Q8BXJ8-2"/>
</dbReference>
<dbReference type="RefSeq" id="NP_001106870.1">
    <property type="nucleotide sequence ID" value="NM_001113399.1"/>
</dbReference>
<dbReference type="RefSeq" id="NP_001106871.1">
    <molecule id="Q8BXJ8-2"/>
    <property type="nucleotide sequence ID" value="NM_001113400.1"/>
</dbReference>
<dbReference type="RefSeq" id="NP_848838.2">
    <molecule id="Q8BXJ8-1"/>
    <property type="nucleotide sequence ID" value="NM_178723.6"/>
</dbReference>
<dbReference type="BioGRID" id="232317">
    <property type="interactions" value="1"/>
</dbReference>
<dbReference type="FunCoup" id="Q8BXJ8">
    <property type="interactions" value="1323"/>
</dbReference>
<dbReference type="IntAct" id="Q8BXJ8">
    <property type="interactions" value="1"/>
</dbReference>
<dbReference type="MINT" id="Q8BXJ8"/>
<dbReference type="STRING" id="10090.ENSMUSP00000088271"/>
<dbReference type="GlyGen" id="Q8BXJ8">
    <property type="glycosylation" value="1 site"/>
</dbReference>
<dbReference type="iPTMnet" id="Q8BXJ8"/>
<dbReference type="PhosphoSitePlus" id="Q8BXJ8"/>
<dbReference type="PaxDb" id="10090-ENSMUSP00000107461"/>
<dbReference type="ProteomicsDB" id="298485">
    <molecule id="Q8BXJ8-1"/>
</dbReference>
<dbReference type="ProteomicsDB" id="298486">
    <molecule id="Q8BXJ8-2"/>
</dbReference>
<dbReference type="Antibodypedia" id="33976">
    <property type="antibodies" value="235 antibodies from 15 providers"/>
</dbReference>
<dbReference type="DNASU" id="241494"/>
<dbReference type="Ensembl" id="ENSMUST00000090766.12">
    <molecule id="Q8BXJ8-1"/>
    <property type="protein sequence ID" value="ENSMUSP00000088271.6"/>
    <property type="gene ID" value="ENSMUSG00000027016.18"/>
</dbReference>
<dbReference type="Ensembl" id="ENSMUST00000111830.9">
    <molecule id="Q8BXJ8-2"/>
    <property type="protein sequence ID" value="ENSMUSP00000107461.3"/>
    <property type="gene ID" value="ENSMUSG00000027016.18"/>
</dbReference>
<dbReference type="Ensembl" id="ENSMUST00000111831.8">
    <molecule id="Q8BXJ8-1"/>
    <property type="protein sequence ID" value="ENSMUSP00000107462.2"/>
    <property type="gene ID" value="ENSMUSG00000027016.18"/>
</dbReference>
<dbReference type="GeneID" id="241494"/>
<dbReference type="KEGG" id="mmu:241494"/>
<dbReference type="UCSC" id="uc008kfy.3">
    <molecule id="Q8BXJ8-1"/>
    <property type="organism name" value="mouse"/>
</dbReference>
<dbReference type="AGR" id="MGI:2444734"/>
<dbReference type="CTD" id="241494"/>
<dbReference type="MGI" id="MGI:2444734">
    <property type="gene designation" value="Zfp385b"/>
</dbReference>
<dbReference type="VEuPathDB" id="HostDB:ENSMUSG00000027016"/>
<dbReference type="eggNOG" id="ENOG502QS7G">
    <property type="taxonomic scope" value="Eukaryota"/>
</dbReference>
<dbReference type="GeneTree" id="ENSGT00940000155611"/>
<dbReference type="HOGENOM" id="CLU_027876_1_0_1"/>
<dbReference type="InParanoid" id="Q8BXJ8"/>
<dbReference type="OMA" id="NYPEDGI"/>
<dbReference type="PhylomeDB" id="Q8BXJ8"/>
<dbReference type="TreeFam" id="TF326622"/>
<dbReference type="BioGRID-ORCS" id="241494">
    <property type="hits" value="2 hits in 79 CRISPR screens"/>
</dbReference>
<dbReference type="ChiTaRS" id="Zfp385b">
    <property type="organism name" value="mouse"/>
</dbReference>
<dbReference type="PRO" id="PR:Q8BXJ8"/>
<dbReference type="Proteomes" id="UP000000589">
    <property type="component" value="Chromosome 2"/>
</dbReference>
<dbReference type="RNAct" id="Q8BXJ8">
    <property type="molecule type" value="protein"/>
</dbReference>
<dbReference type="Bgee" id="ENSMUSG00000027016">
    <property type="expression patterns" value="Expressed in pigmented layer of retina and 174 other cell types or tissues"/>
</dbReference>
<dbReference type="ExpressionAtlas" id="Q8BXJ8">
    <property type="expression patterns" value="baseline and differential"/>
</dbReference>
<dbReference type="GO" id="GO:0005634">
    <property type="term" value="C:nucleus"/>
    <property type="evidence" value="ECO:0000250"/>
    <property type="project" value="UniProtKB"/>
</dbReference>
<dbReference type="GO" id="GO:0003676">
    <property type="term" value="F:nucleic acid binding"/>
    <property type="evidence" value="ECO:0007669"/>
    <property type="project" value="InterPro"/>
</dbReference>
<dbReference type="GO" id="GO:0008270">
    <property type="term" value="F:zinc ion binding"/>
    <property type="evidence" value="ECO:0007669"/>
    <property type="project" value="UniProtKB-KW"/>
</dbReference>
<dbReference type="GO" id="GO:0072332">
    <property type="term" value="P:intrinsic apoptotic signaling pathway by p53 class mediator"/>
    <property type="evidence" value="ECO:0000250"/>
    <property type="project" value="UniProtKB"/>
</dbReference>
<dbReference type="FunFam" id="3.30.160.60:FF:000121">
    <property type="entry name" value="zinc finger protein 385B isoform X1"/>
    <property type="match status" value="1"/>
</dbReference>
<dbReference type="FunFam" id="3.30.160.60:FF:000779">
    <property type="entry name" value="zinc finger protein 385B isoform X1"/>
    <property type="match status" value="1"/>
</dbReference>
<dbReference type="FunFam" id="3.30.160.60:FF:000983">
    <property type="entry name" value="zinc finger protein 385B isoform X1"/>
    <property type="match status" value="1"/>
</dbReference>
<dbReference type="FunFam" id="3.30.160.60:FF:001042">
    <property type="entry name" value="zinc finger protein 385B isoform X1"/>
    <property type="match status" value="1"/>
</dbReference>
<dbReference type="Gene3D" id="3.30.160.60">
    <property type="entry name" value="Classic Zinc Finger"/>
    <property type="match status" value="4"/>
</dbReference>
<dbReference type="InterPro" id="IPR003604">
    <property type="entry name" value="Matrin/U1-like-C_Znf_C2H2"/>
</dbReference>
<dbReference type="InterPro" id="IPR051845">
    <property type="entry name" value="Znf385"/>
</dbReference>
<dbReference type="InterPro" id="IPR036236">
    <property type="entry name" value="Znf_C2H2_sf"/>
</dbReference>
<dbReference type="InterPro" id="IPR013087">
    <property type="entry name" value="Znf_C2H2_type"/>
</dbReference>
<dbReference type="PANTHER" id="PTHR23067">
    <property type="entry name" value="DOUBLE-STRANDED RNA-BINDING ZINC FINGER PROTEIN"/>
    <property type="match status" value="1"/>
</dbReference>
<dbReference type="PANTHER" id="PTHR23067:SF8">
    <property type="entry name" value="ZINC FINGER PROTEIN 385B"/>
    <property type="match status" value="1"/>
</dbReference>
<dbReference type="Pfam" id="PF12874">
    <property type="entry name" value="zf-met"/>
    <property type="match status" value="4"/>
</dbReference>
<dbReference type="SMART" id="SM00355">
    <property type="entry name" value="ZnF_C2H2"/>
    <property type="match status" value="4"/>
</dbReference>
<dbReference type="SMART" id="SM00451">
    <property type="entry name" value="ZnF_U1"/>
    <property type="match status" value="4"/>
</dbReference>
<dbReference type="SUPFAM" id="SSF57667">
    <property type="entry name" value="beta-beta-alpha zinc fingers"/>
    <property type="match status" value="4"/>
</dbReference>
<proteinExistence type="evidence at transcript level"/>
<feature type="chain" id="PRO_0000191813" description="Zinc finger protein 385B">
    <location>
        <begin position="1"/>
        <end position="482"/>
    </location>
</feature>
<feature type="zinc finger region" description="Matrin-type 1">
    <location>
        <begin position="34"/>
        <end position="64"/>
    </location>
</feature>
<feature type="zinc finger region" description="Matrin-type 2">
    <location>
        <begin position="169"/>
        <end position="199"/>
    </location>
</feature>
<feature type="zinc finger region" description="Matrin-type 3">
    <location>
        <begin position="294"/>
        <end position="328"/>
    </location>
</feature>
<feature type="zinc finger region" description="Matrin-type 4">
    <location>
        <begin position="360"/>
        <end position="390"/>
    </location>
</feature>
<feature type="region of interest" description="Required for induction of apoptosis" evidence="1">
    <location>
        <begin position="1"/>
        <end position="105"/>
    </location>
</feature>
<feature type="region of interest" description="Disordered" evidence="2">
    <location>
        <begin position="54"/>
        <end position="75"/>
    </location>
</feature>
<feature type="region of interest" description="Interaction with p53/TP53" evidence="1">
    <location>
        <begin position="106"/>
        <end position="482"/>
    </location>
</feature>
<feature type="region of interest" description="Disordered" evidence="2">
    <location>
        <begin position="189"/>
        <end position="259"/>
    </location>
</feature>
<feature type="region of interest" description="Disordered" evidence="2">
    <location>
        <begin position="268"/>
        <end position="287"/>
    </location>
</feature>
<feature type="region of interest" description="Disordered" evidence="2">
    <location>
        <begin position="331"/>
        <end position="352"/>
    </location>
</feature>
<feature type="region of interest" description="Disordered" evidence="2">
    <location>
        <begin position="378"/>
        <end position="397"/>
    </location>
</feature>
<feature type="compositionally biased region" description="Basic and acidic residues" evidence="2">
    <location>
        <begin position="231"/>
        <end position="240"/>
    </location>
</feature>
<feature type="splice variant" id="VSP_015981" description="In isoform 2." evidence="4">
    <location>
        <begin position="1"/>
        <end position="114"/>
    </location>
</feature>
<protein>
    <recommendedName>
        <fullName>Zinc finger protein 385B</fullName>
    </recommendedName>
    <alternativeName>
        <fullName>Zinc finger protein 533</fullName>
    </alternativeName>
</protein>
<accession>Q8BXJ8</accession>
<accession>Q8BWQ7</accession>
<evidence type="ECO:0000250" key="1"/>
<evidence type="ECO:0000256" key="2">
    <source>
        <dbReference type="SAM" id="MobiDB-lite"/>
    </source>
</evidence>
<evidence type="ECO:0000269" key="3">
    <source>
    </source>
</evidence>
<evidence type="ECO:0000303" key="4">
    <source>
    </source>
</evidence>
<gene>
    <name type="primary">Znf385b</name>
    <name type="synonym">Zfp385b</name>
    <name type="synonym">Zfp533</name>
    <name type="synonym">Znf533</name>
</gene>
<keyword id="KW-0025">Alternative splicing</keyword>
<keyword id="KW-0053">Apoptosis</keyword>
<keyword id="KW-0479">Metal-binding</keyword>
<keyword id="KW-0539">Nucleus</keyword>
<keyword id="KW-1185">Reference proteome</keyword>
<keyword id="KW-0677">Repeat</keyword>
<keyword id="KW-0862">Zinc</keyword>
<keyword id="KW-0863">Zinc-finger</keyword>
<comment type="function">
    <text evidence="1">May play a role in p53/TP53-mediated apoptosis.</text>
</comment>
<comment type="subunit">
    <text evidence="1">Interacts with p53/TP53; the interaction is direct.</text>
</comment>
<comment type="subcellular location">
    <subcellularLocation>
        <location evidence="1">Nucleus</location>
    </subcellularLocation>
</comment>
<comment type="alternative products">
    <event type="alternative splicing"/>
    <isoform>
        <id>Q8BXJ8-1</id>
        <name>1</name>
        <sequence type="displayed"/>
    </isoform>
    <isoform>
        <id>Q8BXJ8-2</id>
        <name>2</name>
        <sequence type="described" ref="VSP_015981"/>
    </isoform>
</comment>
<comment type="developmental stage">
    <text evidence="3">Mainly expressed in developing brain.</text>
</comment>